<sequence length="494" mass="56560">MFTMDDLNQMDTQTLTDTLGSIFEHSSWIAERSAALRPFSSLSDLHRKMTGIVKAADRETQLDLIKKHPRLGTKKTMSDDSVREQQNAGLGKLEQQEYEEFLMLNEHYYDRFGFPFILAVKGKTKQDIHQALLARLESERETEFQQALIEIYRIARFRLADIITEKGETQMKRTMSYGKGNVFAYRTYLKPLTGVKQIPESSFAGRDNTVVGVDVTCEIGGEAFLPSFTDGDNTLVVATDSMKNFIQRHLASYEGTTTEGFLHYVAHRFLDTYSHMDTITLTGEDIPFEAMPAYEEKELSTSRLVFRRSRNERSRSVLKAERSGNTITITEQYSEIMDLQLVKVSGNSFVGFIRDEYTTLPEDGNRPLFVYLNISWQYENTNDSYASDPARYVAAEQVRDLASTVFHELETPSIQNLIYHIGCRILARFPQLTDVSFQSQNHTWDTVVEEIPGSKGKVYTEPRPPYGFQHFTVTREDAEKEKQKAAEKCRSLKA</sequence>
<organism>
    <name type="scientific">Bacillus subtilis (strain 168)</name>
    <dbReference type="NCBI Taxonomy" id="224308"/>
    <lineage>
        <taxon>Bacteria</taxon>
        <taxon>Bacillati</taxon>
        <taxon>Bacillota</taxon>
        <taxon>Bacilli</taxon>
        <taxon>Bacillales</taxon>
        <taxon>Bacillaceae</taxon>
        <taxon>Bacillus</taxon>
    </lineage>
</organism>
<comment type="function">
    <text evidence="4 6 7">Catalyzes two steps in the degradation of uric acid, i.e. the oxidation of uric acid to 5-hydroxyisourate (HIU) and the stereoselective decarboxylation of 2-oxo-4-hydroxy-4-carboxy-5-ureidoimidazoline (OHCU) to (S)-allantoin.</text>
</comment>
<comment type="catalytic activity">
    <reaction>
        <text>5-hydroxy-2-oxo-4-ureido-2,5-dihydro-1H-imidazole-5-carboxylate + H(+) = (S)-allantoin + CO2</text>
        <dbReference type="Rhea" id="RHEA:26301"/>
        <dbReference type="ChEBI" id="CHEBI:15378"/>
        <dbReference type="ChEBI" id="CHEBI:15678"/>
        <dbReference type="ChEBI" id="CHEBI:16526"/>
        <dbReference type="ChEBI" id="CHEBI:58639"/>
        <dbReference type="EC" id="4.1.1.97"/>
    </reaction>
</comment>
<comment type="catalytic activity">
    <reaction>
        <text>urate + O2 + H2O = 5-hydroxyisourate + H2O2</text>
        <dbReference type="Rhea" id="RHEA:21368"/>
        <dbReference type="ChEBI" id="CHEBI:15377"/>
        <dbReference type="ChEBI" id="CHEBI:15379"/>
        <dbReference type="ChEBI" id="CHEBI:16240"/>
        <dbReference type="ChEBI" id="CHEBI:17775"/>
        <dbReference type="ChEBI" id="CHEBI:18072"/>
        <dbReference type="EC" id="1.7.3.3"/>
    </reaction>
</comment>
<comment type="biophysicochemical properties">
    <phDependence>
        <text evidence="7">Optimum pH is 8.</text>
    </phDependence>
    <temperatureDependence>
        <text evidence="7">Optimum temperature is 37 degrees Celsius. Retains 90% of its activity after 72 hours of incubation at 20 degrees Celsius or -4 degrees Celsius, but loses 50% of its activity after 12 hours of incubation at 37 degrees Celsius.</text>
    </temperatureDependence>
</comment>
<comment type="pathway">
    <text>Purine metabolism; urate degradation; (S)-allantoin from urate: step 1/3.</text>
</comment>
<comment type="pathway">
    <text>Purine metabolism; urate degradation; (S)-allantoin from urate: step 3/3.</text>
</comment>
<comment type="induction">
    <text evidence="4 5">Expression is very low in excess nitrogen (glutamate plus ammonia) and is induced by TnrA during imiting-nitrogen conditions (glutamate). Expression is further induced when allantoin or uric acid are added during limiting-nitrogen conditions.</text>
</comment>
<comment type="miscellaneous">
    <text>HIU and OHCU are unstable, they spontaneously decompose to form a racemic mixture of allantoin.</text>
</comment>
<comment type="similarity">
    <text evidence="8">In the N-terminal section; belongs to the OHCU decarboxylase family.</text>
</comment>
<comment type="similarity">
    <text evidence="8">In the C-terminal section; belongs to the uricase family.</text>
</comment>
<feature type="chain" id="PRO_0000166006" description="Uric acid degradation bifunctional protein PucL">
    <location>
        <begin position="1"/>
        <end position="494"/>
    </location>
</feature>
<feature type="region of interest" description="OHCU decarboxylase">
    <location>
        <begin position="1"/>
        <end position="174"/>
    </location>
</feature>
<feature type="region of interest" description="Urate oxidase">
    <location>
        <begin position="175"/>
        <end position="494"/>
    </location>
</feature>
<feature type="active site" description="Proton donor; for OHCU decarboxylase activity" evidence="9">
    <location>
        <position position="68"/>
    </location>
</feature>
<feature type="active site" description="Charge relay system; for urate oxidase activity" evidence="2">
    <location>
        <position position="179"/>
    </location>
</feature>
<feature type="active site" description="Charge relay system" evidence="3">
    <location>
        <position position="190"/>
    </location>
</feature>
<feature type="active site" description="Charge relay system; for urate oxidase activity" evidence="2">
    <location>
        <position position="239"/>
    </location>
</feature>
<feature type="binding site" evidence="1">
    <location>
        <position position="69"/>
    </location>
    <ligand>
        <name>5-hydroxy-2-oxo-4-ureido-2,5-dihydro-1H-imidazole-5-carboxylate</name>
        <dbReference type="ChEBI" id="CHEBI:58639"/>
    </ligand>
</feature>
<feature type="binding site" evidence="9">
    <location>
        <begin position="81"/>
        <end position="85"/>
    </location>
    <ligand>
        <name>5-hydroxy-2-oxo-4-ureido-2,5-dihydro-1H-imidazole-5-carboxylate</name>
        <dbReference type="ChEBI" id="CHEBI:58639"/>
    </ligand>
</feature>
<feature type="binding site" evidence="1">
    <location>
        <begin position="116"/>
        <end position="120"/>
    </location>
    <ligand>
        <name>5-hydroxy-2-oxo-4-ureido-2,5-dihydro-1H-imidazole-5-carboxylate</name>
        <dbReference type="ChEBI" id="CHEBI:58639"/>
    </ligand>
</feature>
<feature type="binding site" evidence="3">
    <location>
        <position position="239"/>
    </location>
    <ligand>
        <name>urate</name>
        <dbReference type="ChEBI" id="CHEBI:17775"/>
    </ligand>
</feature>
<feature type="binding site" evidence="3">
    <location>
        <position position="240"/>
    </location>
    <ligand>
        <name>urate</name>
        <dbReference type="ChEBI" id="CHEBI:17775"/>
    </ligand>
</feature>
<feature type="binding site" evidence="2">
    <location>
        <position position="349"/>
    </location>
    <ligand>
        <name>urate</name>
        <dbReference type="ChEBI" id="CHEBI:17775"/>
    </ligand>
</feature>
<feature type="binding site" evidence="2">
    <location>
        <position position="366"/>
    </location>
    <ligand>
        <name>urate</name>
        <dbReference type="ChEBI" id="CHEBI:17775"/>
    </ligand>
</feature>
<feature type="binding site" evidence="3">
    <location>
        <position position="414"/>
    </location>
    <ligand>
        <name>urate</name>
        <dbReference type="ChEBI" id="CHEBI:17775"/>
    </ligand>
</feature>
<feature type="binding site" evidence="3">
    <location>
        <position position="415"/>
    </location>
    <ligand>
        <name>urate</name>
        <dbReference type="ChEBI" id="CHEBI:17775"/>
    </ligand>
</feature>
<feature type="binding site" evidence="3">
    <location>
        <position position="441"/>
    </location>
    <ligand>
        <name>urate</name>
        <dbReference type="ChEBI" id="CHEBI:17775"/>
    </ligand>
</feature>
<feature type="mutagenesis site" description="Loss of OHCU decarboxylase activity." evidence="6">
    <original>H</original>
    <variation>A</variation>
    <location>
        <position position="68"/>
    </location>
</feature>
<feature type="mutagenesis site" description="Loss of OHCU decarboxylase activity." evidence="6">
    <original>E</original>
    <variation>A</variation>
    <location>
        <position position="84"/>
    </location>
</feature>
<feature type="mutagenesis site" description="Loss of OHCU decarboxylase activity." evidence="6">
    <original>R</original>
    <variation>A</variation>
    <location>
        <position position="158"/>
    </location>
</feature>
<feature type="strand" evidence="10">
    <location>
        <begin position="177"/>
        <end position="188"/>
    </location>
</feature>
<feature type="strand" evidence="10">
    <location>
        <begin position="209"/>
        <end position="220"/>
    </location>
</feature>
<feature type="helix" evidence="10">
    <location>
        <begin position="238"/>
        <end position="252"/>
    </location>
</feature>
<feature type="helix" evidence="10">
    <location>
        <begin position="258"/>
        <end position="272"/>
    </location>
</feature>
<feature type="strand" evidence="10">
    <location>
        <begin position="278"/>
        <end position="286"/>
    </location>
</feature>
<feature type="strand" evidence="10">
    <location>
        <begin position="288"/>
        <end position="295"/>
    </location>
</feature>
<feature type="strand" evidence="10">
    <location>
        <begin position="298"/>
        <end position="308"/>
    </location>
</feature>
<feature type="strand" evidence="10">
    <location>
        <begin position="313"/>
        <end position="322"/>
    </location>
</feature>
<feature type="strand" evidence="10">
    <location>
        <begin position="324"/>
        <end position="343"/>
    </location>
</feature>
<feature type="strand" evidence="10">
    <location>
        <begin position="368"/>
        <end position="380"/>
    </location>
</feature>
<feature type="helix" evidence="10">
    <location>
        <begin position="381"/>
        <end position="385"/>
    </location>
</feature>
<feature type="helix" evidence="10">
    <location>
        <begin position="389"/>
        <end position="391"/>
    </location>
</feature>
<feature type="helix" evidence="10">
    <location>
        <begin position="395"/>
        <end position="407"/>
    </location>
</feature>
<feature type="strand" evidence="10">
    <location>
        <begin position="408"/>
        <end position="411"/>
    </location>
</feature>
<feature type="helix" evidence="10">
    <location>
        <begin position="414"/>
        <end position="428"/>
    </location>
</feature>
<feature type="strand" evidence="10">
    <location>
        <begin position="432"/>
        <end position="441"/>
    </location>
</feature>
<feature type="strand" evidence="10">
    <location>
        <begin position="445"/>
        <end position="448"/>
    </location>
</feature>
<feature type="strand" evidence="10">
    <location>
        <begin position="458"/>
        <end position="460"/>
    </location>
</feature>
<feature type="strand" evidence="10">
    <location>
        <begin position="467"/>
        <end position="474"/>
    </location>
</feature>
<feature type="turn" evidence="10">
    <location>
        <begin position="475"/>
        <end position="477"/>
    </location>
</feature>
<keyword id="KW-0002">3D-structure</keyword>
<keyword id="KW-0210">Decarboxylase</keyword>
<keyword id="KW-0456">Lyase</keyword>
<keyword id="KW-0511">Multifunctional enzyme</keyword>
<keyword id="KW-0560">Oxidoreductase</keyword>
<keyword id="KW-0659">Purine metabolism</keyword>
<keyword id="KW-1185">Reference proteome</keyword>
<protein>
    <recommendedName>
        <fullName>Uric acid degradation bifunctional protein PucL</fullName>
    </recommendedName>
    <domain>
        <recommendedName>
            <fullName>2-oxo-4-hydroxy-4-carboxy-5-ureidoimidazoline decarboxylase</fullName>
            <shortName>OHCU decarboxylase</shortName>
            <ecNumber>4.1.1.97</ecNumber>
        </recommendedName>
    </domain>
    <domain>
        <recommendedName>
            <fullName>Uricase</fullName>
            <ecNumber>1.7.3.3</ecNumber>
        </recommendedName>
        <alternativeName>
            <fullName>Urate oxidase</fullName>
        </alternativeName>
    </domain>
</protein>
<name>PUCL_BACSU</name>
<evidence type="ECO:0000250" key="1"/>
<evidence type="ECO:0000250" key="2">
    <source>
        <dbReference type="UniProtKB" id="D0VWQ1"/>
    </source>
</evidence>
<evidence type="ECO:0000250" key="3">
    <source>
        <dbReference type="UniProtKB" id="Q00511"/>
    </source>
</evidence>
<evidence type="ECO:0000269" key="4">
    <source>
    </source>
</evidence>
<evidence type="ECO:0000269" key="5">
    <source>
    </source>
</evidence>
<evidence type="ECO:0000269" key="6">
    <source>
    </source>
</evidence>
<evidence type="ECO:0000269" key="7">
    <source>
    </source>
</evidence>
<evidence type="ECO:0000305" key="8"/>
<evidence type="ECO:0000305" key="9">
    <source>
    </source>
</evidence>
<evidence type="ECO:0007829" key="10">
    <source>
        <dbReference type="PDB" id="6A4M"/>
    </source>
</evidence>
<reference key="1">
    <citation type="journal article" date="1997" name="Nature">
        <title>The complete genome sequence of the Gram-positive bacterium Bacillus subtilis.</title>
        <authorList>
            <person name="Kunst F."/>
            <person name="Ogasawara N."/>
            <person name="Moszer I."/>
            <person name="Albertini A.M."/>
            <person name="Alloni G."/>
            <person name="Azevedo V."/>
            <person name="Bertero M.G."/>
            <person name="Bessieres P."/>
            <person name="Bolotin A."/>
            <person name="Borchert S."/>
            <person name="Borriss R."/>
            <person name="Boursier L."/>
            <person name="Brans A."/>
            <person name="Braun M."/>
            <person name="Brignell S.C."/>
            <person name="Bron S."/>
            <person name="Brouillet S."/>
            <person name="Bruschi C.V."/>
            <person name="Caldwell B."/>
            <person name="Capuano V."/>
            <person name="Carter N.M."/>
            <person name="Choi S.-K."/>
            <person name="Codani J.-J."/>
            <person name="Connerton I.F."/>
            <person name="Cummings N.J."/>
            <person name="Daniel R.A."/>
            <person name="Denizot F."/>
            <person name="Devine K.M."/>
            <person name="Duesterhoeft A."/>
            <person name="Ehrlich S.D."/>
            <person name="Emmerson P.T."/>
            <person name="Entian K.-D."/>
            <person name="Errington J."/>
            <person name="Fabret C."/>
            <person name="Ferrari E."/>
            <person name="Foulger D."/>
            <person name="Fritz C."/>
            <person name="Fujita M."/>
            <person name="Fujita Y."/>
            <person name="Fuma S."/>
            <person name="Galizzi A."/>
            <person name="Galleron N."/>
            <person name="Ghim S.-Y."/>
            <person name="Glaser P."/>
            <person name="Goffeau A."/>
            <person name="Golightly E.J."/>
            <person name="Grandi G."/>
            <person name="Guiseppi G."/>
            <person name="Guy B.J."/>
            <person name="Haga K."/>
            <person name="Haiech J."/>
            <person name="Harwood C.R."/>
            <person name="Henaut A."/>
            <person name="Hilbert H."/>
            <person name="Holsappel S."/>
            <person name="Hosono S."/>
            <person name="Hullo M.-F."/>
            <person name="Itaya M."/>
            <person name="Jones L.-M."/>
            <person name="Joris B."/>
            <person name="Karamata D."/>
            <person name="Kasahara Y."/>
            <person name="Klaerr-Blanchard M."/>
            <person name="Klein C."/>
            <person name="Kobayashi Y."/>
            <person name="Koetter P."/>
            <person name="Koningstein G."/>
            <person name="Krogh S."/>
            <person name="Kumano M."/>
            <person name="Kurita K."/>
            <person name="Lapidus A."/>
            <person name="Lardinois S."/>
            <person name="Lauber J."/>
            <person name="Lazarevic V."/>
            <person name="Lee S.-M."/>
            <person name="Levine A."/>
            <person name="Liu H."/>
            <person name="Masuda S."/>
            <person name="Mauel C."/>
            <person name="Medigue C."/>
            <person name="Medina N."/>
            <person name="Mellado R.P."/>
            <person name="Mizuno M."/>
            <person name="Moestl D."/>
            <person name="Nakai S."/>
            <person name="Noback M."/>
            <person name="Noone D."/>
            <person name="O'Reilly M."/>
            <person name="Ogawa K."/>
            <person name="Ogiwara A."/>
            <person name="Oudega B."/>
            <person name="Park S.-H."/>
            <person name="Parro V."/>
            <person name="Pohl T.M."/>
            <person name="Portetelle D."/>
            <person name="Porwollik S."/>
            <person name="Prescott A.M."/>
            <person name="Presecan E."/>
            <person name="Pujic P."/>
            <person name="Purnelle B."/>
            <person name="Rapoport G."/>
            <person name="Rey M."/>
            <person name="Reynolds S."/>
            <person name="Rieger M."/>
            <person name="Rivolta C."/>
            <person name="Rocha E."/>
            <person name="Roche B."/>
            <person name="Rose M."/>
            <person name="Sadaie Y."/>
            <person name="Sato T."/>
            <person name="Scanlan E."/>
            <person name="Schleich S."/>
            <person name="Schroeter R."/>
            <person name="Scoffone F."/>
            <person name="Sekiguchi J."/>
            <person name="Sekowska A."/>
            <person name="Seror S.J."/>
            <person name="Serror P."/>
            <person name="Shin B.-S."/>
            <person name="Soldo B."/>
            <person name="Sorokin A."/>
            <person name="Tacconi E."/>
            <person name="Takagi T."/>
            <person name="Takahashi H."/>
            <person name="Takemaru K."/>
            <person name="Takeuchi M."/>
            <person name="Tamakoshi A."/>
            <person name="Tanaka T."/>
            <person name="Terpstra P."/>
            <person name="Tognoni A."/>
            <person name="Tosato V."/>
            <person name="Uchiyama S."/>
            <person name="Vandenbol M."/>
            <person name="Vannier F."/>
            <person name="Vassarotti A."/>
            <person name="Viari A."/>
            <person name="Wambutt R."/>
            <person name="Wedler E."/>
            <person name="Wedler H."/>
            <person name="Weitzenegger T."/>
            <person name="Winters P."/>
            <person name="Wipat A."/>
            <person name="Yamamoto H."/>
            <person name="Yamane K."/>
            <person name="Yasumoto K."/>
            <person name="Yata K."/>
            <person name="Yoshida K."/>
            <person name="Yoshikawa H.-F."/>
            <person name="Zumstein E."/>
            <person name="Yoshikawa H."/>
            <person name="Danchin A."/>
        </authorList>
    </citation>
    <scope>NUCLEOTIDE SEQUENCE [LARGE SCALE GENOMIC DNA]</scope>
    <source>
        <strain>168</strain>
    </source>
</reference>
<reference key="2">
    <citation type="journal article" date="2001" name="J. Bacteriol.">
        <title>Functional analysis of 14 genes that constitute the purine catabolic pathway in Bacillus subtilis and evidence for a novel regulon controlled by the PucR transcription activator.</title>
        <authorList>
            <person name="Schultz A.C."/>
            <person name="Nygaard P."/>
            <person name="Saxild H.H."/>
        </authorList>
    </citation>
    <scope>FUNCTION AS A URATE OXIDASE</scope>
    <scope>INDUCTION</scope>
    <source>
        <strain>168</strain>
    </source>
</reference>
<reference key="3">
    <citation type="journal article" date="2003" name="Mol. Microbiol.">
        <title>Identification of additional TnrA-regulated genes of Bacillus subtilis associated with a TnrA box.</title>
        <authorList>
            <person name="Yoshida K."/>
            <person name="Yamaguchi H."/>
            <person name="Kinehara M."/>
            <person name="Ohki Y.-H."/>
            <person name="Nakaura Y."/>
            <person name="Fujita Y."/>
        </authorList>
    </citation>
    <scope>INDUCTION BY TNRA</scope>
</reference>
<reference key="4">
    <citation type="journal article" date="2007" name="J. Biol. Chem.">
        <title>Structural and functional basis for (S)-allantoin formation in the ureide pathway.</title>
        <authorList>
            <person name="Kim K."/>
            <person name="Park J."/>
            <person name="Rhee S."/>
        </authorList>
    </citation>
    <scope>FUNCTION AS A OHCU DECARBOXYLASE</scope>
    <scope>CATALYTIC ACTIVITY</scope>
    <scope>REACTION MECHANISM</scope>
    <scope>MUTAGENESIS OF HIS-68; GLU-84 AND ARG-158</scope>
</reference>
<reference key="5">
    <citation type="journal article" date="2010" name="J. Biomed. Biotechnol.">
        <title>Cloning, purification, and partial characterization of Bacillus subtilis urate oxidase expressed in Escherichia coli.</title>
        <authorList>
            <person name="Pfrimer P."/>
            <person name="de Moraes L.M."/>
            <person name="Galdino A.S."/>
            <person name="Salles L.P."/>
            <person name="Reis V.C."/>
            <person name="De Marco J.L."/>
            <person name="Prates M.V."/>
            <person name="Bloch C. Jr."/>
            <person name="Torres F.A."/>
        </authorList>
    </citation>
    <scope>FUNCTION AS URATE OXIDASE</scope>
    <scope>CATALYTIC ACTIVITY</scope>
    <scope>IDENTIFICATION BY MASS SPECTROMETRY</scope>
    <scope>BIOPHYSICOCHEMICAL PROPERTIES</scope>
    <source>
        <strain>168 / NCCB 69003</strain>
    </source>
</reference>
<accession>O32141</accession>
<dbReference type="EC" id="4.1.1.97"/>
<dbReference type="EC" id="1.7.3.3"/>
<dbReference type="EMBL" id="AL009126">
    <property type="protein sequence ID" value="CAB15235.1"/>
    <property type="molecule type" value="Genomic_DNA"/>
</dbReference>
<dbReference type="PIR" id="G70016">
    <property type="entry name" value="G70016"/>
</dbReference>
<dbReference type="RefSeq" id="NP_391125.1">
    <property type="nucleotide sequence ID" value="NC_000964.3"/>
</dbReference>
<dbReference type="RefSeq" id="WP_003242600.1">
    <property type="nucleotide sequence ID" value="NZ_OZ025638.1"/>
</dbReference>
<dbReference type="PDB" id="6A4M">
    <property type="method" value="X-ray"/>
    <property type="resolution" value="2.60 A"/>
    <property type="chains" value="A=175-479"/>
</dbReference>
<dbReference type="PDBsum" id="6A4M"/>
<dbReference type="SMR" id="O32141"/>
<dbReference type="FunCoup" id="O32141">
    <property type="interactions" value="169"/>
</dbReference>
<dbReference type="STRING" id="224308.BSU32450"/>
<dbReference type="PaxDb" id="224308-BSU32450"/>
<dbReference type="EnsemblBacteria" id="CAB15235">
    <property type="protein sequence ID" value="CAB15235"/>
    <property type="gene ID" value="BSU_32450"/>
</dbReference>
<dbReference type="GeneID" id="936669"/>
<dbReference type="KEGG" id="bsu:BSU32450"/>
<dbReference type="PATRIC" id="fig|224308.179.peg.3512"/>
<dbReference type="eggNOG" id="COG3195">
    <property type="taxonomic scope" value="Bacteria"/>
</dbReference>
<dbReference type="eggNOG" id="COG3648">
    <property type="taxonomic scope" value="Bacteria"/>
</dbReference>
<dbReference type="InParanoid" id="O32141"/>
<dbReference type="OrthoDB" id="9809009at2"/>
<dbReference type="PhylomeDB" id="O32141"/>
<dbReference type="BioCyc" id="BSUB:BSU32450-MONOMER"/>
<dbReference type="SABIO-RK" id="O32141"/>
<dbReference type="UniPathway" id="UPA00394">
    <property type="reaction ID" value="UER00650"/>
</dbReference>
<dbReference type="UniPathway" id="UPA00394">
    <property type="reaction ID" value="UER00652"/>
</dbReference>
<dbReference type="Proteomes" id="UP000001570">
    <property type="component" value="Chromosome"/>
</dbReference>
<dbReference type="GO" id="GO:0051997">
    <property type="term" value="F:2-oxo-4-hydroxy-4-carboxy-5-ureidoimidazoline decarboxylase activity"/>
    <property type="evidence" value="ECO:0000318"/>
    <property type="project" value="GO_Central"/>
</dbReference>
<dbReference type="GO" id="GO:0004846">
    <property type="term" value="F:urate oxidase activity"/>
    <property type="evidence" value="ECO:0007669"/>
    <property type="project" value="UniProtKB-EC"/>
</dbReference>
<dbReference type="GO" id="GO:0000255">
    <property type="term" value="P:allantoin metabolic process"/>
    <property type="evidence" value="ECO:0007669"/>
    <property type="project" value="InterPro"/>
</dbReference>
<dbReference type="GO" id="GO:0006144">
    <property type="term" value="P:purine nucleobase metabolic process"/>
    <property type="evidence" value="ECO:0007669"/>
    <property type="project" value="UniProtKB-KW"/>
</dbReference>
<dbReference type="GO" id="GO:0019628">
    <property type="term" value="P:urate catabolic process"/>
    <property type="evidence" value="ECO:0000318"/>
    <property type="project" value="GO_Central"/>
</dbReference>
<dbReference type="CDD" id="cd00445">
    <property type="entry name" value="Uricase"/>
    <property type="match status" value="1"/>
</dbReference>
<dbReference type="FunFam" id="3.10.270.10:FF:000004">
    <property type="entry name" value="2-oxo-4-hydroxy-4-carboxy--5-ureidoimidazoline (OHCU) decarboxylase"/>
    <property type="match status" value="1"/>
</dbReference>
<dbReference type="Gene3D" id="1.10.3330.10">
    <property type="entry name" value="Oxo-4-hydroxy-4-carboxy-5-ureidoimidazoline decarboxylase"/>
    <property type="match status" value="1"/>
</dbReference>
<dbReference type="Gene3D" id="3.10.270.10">
    <property type="entry name" value="Urate Oxidase"/>
    <property type="match status" value="1"/>
</dbReference>
<dbReference type="InterPro" id="IPR018020">
    <property type="entry name" value="OHCU_decarboxylase"/>
</dbReference>
<dbReference type="InterPro" id="IPR017580">
    <property type="entry name" value="OHCU_decarboxylase-1"/>
</dbReference>
<dbReference type="InterPro" id="IPR036778">
    <property type="entry name" value="OHCU_decarboxylase_sf"/>
</dbReference>
<dbReference type="InterPro" id="IPR002042">
    <property type="entry name" value="Uricase"/>
</dbReference>
<dbReference type="InterPro" id="IPR019842">
    <property type="entry name" value="Uricase_CS"/>
</dbReference>
<dbReference type="NCBIfam" id="TIGR03164">
    <property type="entry name" value="UHCUDC"/>
    <property type="match status" value="1"/>
</dbReference>
<dbReference type="NCBIfam" id="TIGR03383">
    <property type="entry name" value="urate_oxi"/>
    <property type="match status" value="1"/>
</dbReference>
<dbReference type="PANTHER" id="PTHR43466">
    <property type="entry name" value="2-OXO-4-HYDROXY-4-CARBOXY-5-UREIDOIMIDAZOLINE DECARBOXYLASE-RELATED"/>
    <property type="match status" value="1"/>
</dbReference>
<dbReference type="PANTHER" id="PTHR43466:SF1">
    <property type="entry name" value="2-OXO-4-HYDROXY-4-CARBOXY-5-UREIDOIMIDAZOLINE DECARBOXYLASE-RELATED"/>
    <property type="match status" value="1"/>
</dbReference>
<dbReference type="Pfam" id="PF09349">
    <property type="entry name" value="OHCU_decarbox"/>
    <property type="match status" value="1"/>
</dbReference>
<dbReference type="Pfam" id="PF01014">
    <property type="entry name" value="Uricase"/>
    <property type="match status" value="1"/>
</dbReference>
<dbReference type="PRINTS" id="PR00093">
    <property type="entry name" value="URICASE"/>
</dbReference>
<dbReference type="SUPFAM" id="SSF55620">
    <property type="entry name" value="Tetrahydrobiopterin biosynthesis enzymes-like"/>
    <property type="match status" value="2"/>
</dbReference>
<dbReference type="SUPFAM" id="SSF158694">
    <property type="entry name" value="UraD-Like"/>
    <property type="match status" value="1"/>
</dbReference>
<dbReference type="PROSITE" id="PS00366">
    <property type="entry name" value="URICASE"/>
    <property type="match status" value="1"/>
</dbReference>
<gene>
    <name type="primary">pucL</name>
    <name type="synonym">yunL</name>
    <name type="ordered locus">BSU32450</name>
</gene>
<proteinExistence type="evidence at protein level"/>